<dbReference type="EMBL" id="AC027135">
    <property type="protein sequence ID" value="AAG51260.1"/>
    <property type="molecule type" value="Genomic_DNA"/>
</dbReference>
<dbReference type="EMBL" id="CP002684">
    <property type="protein sequence ID" value="AEE31355.1"/>
    <property type="molecule type" value="Genomic_DNA"/>
</dbReference>
<dbReference type="EMBL" id="CP002684">
    <property type="protein sequence ID" value="ANM60002.1"/>
    <property type="molecule type" value="Genomic_DNA"/>
</dbReference>
<dbReference type="PIR" id="C86440">
    <property type="entry name" value="C86440"/>
</dbReference>
<dbReference type="RefSeq" id="NP_001319122.1">
    <property type="nucleotide sequence ID" value="NM_001332963.1"/>
</dbReference>
<dbReference type="RefSeq" id="NP_174428.1">
    <property type="nucleotide sequence ID" value="NM_102882.2"/>
</dbReference>
<dbReference type="SMR" id="Q9C866"/>
<dbReference type="FunCoup" id="Q9C866">
    <property type="interactions" value="233"/>
</dbReference>
<dbReference type="PaxDb" id="3702-AT1G31430.1"/>
<dbReference type="ProteomicsDB" id="226490"/>
<dbReference type="EnsemblPlants" id="AT1G31430.1">
    <property type="protein sequence ID" value="AT1G31430.1"/>
    <property type="gene ID" value="AT1G31430"/>
</dbReference>
<dbReference type="EnsemblPlants" id="AT1G31430.2">
    <property type="protein sequence ID" value="AT1G31430.2"/>
    <property type="gene ID" value="AT1G31430"/>
</dbReference>
<dbReference type="GeneID" id="840033"/>
<dbReference type="Gramene" id="AT1G31430.1">
    <property type="protein sequence ID" value="AT1G31430.1"/>
    <property type="gene ID" value="AT1G31430"/>
</dbReference>
<dbReference type="Gramene" id="AT1G31430.2">
    <property type="protein sequence ID" value="AT1G31430.2"/>
    <property type="gene ID" value="AT1G31430"/>
</dbReference>
<dbReference type="KEGG" id="ath:AT1G31430"/>
<dbReference type="Araport" id="AT1G31430"/>
<dbReference type="TAIR" id="AT1G31430"/>
<dbReference type="eggNOG" id="KOG4197">
    <property type="taxonomic scope" value="Eukaryota"/>
</dbReference>
<dbReference type="HOGENOM" id="CLU_002706_0_6_1"/>
<dbReference type="InParanoid" id="Q9C866"/>
<dbReference type="OMA" id="DCYVCNS"/>
<dbReference type="PhylomeDB" id="Q9C866"/>
<dbReference type="PRO" id="PR:Q9C866"/>
<dbReference type="Proteomes" id="UP000006548">
    <property type="component" value="Chromosome 1"/>
</dbReference>
<dbReference type="ExpressionAtlas" id="Q9C866">
    <property type="expression patterns" value="baseline and differential"/>
</dbReference>
<dbReference type="GO" id="GO:0003723">
    <property type="term" value="F:RNA binding"/>
    <property type="evidence" value="ECO:0007669"/>
    <property type="project" value="InterPro"/>
</dbReference>
<dbReference type="GO" id="GO:0009451">
    <property type="term" value="P:RNA modification"/>
    <property type="evidence" value="ECO:0007669"/>
    <property type="project" value="InterPro"/>
</dbReference>
<dbReference type="FunFam" id="1.25.40.10:FF:000989">
    <property type="entry name" value="Pentatricopeptide repeat-containing protein At1g31430"/>
    <property type="match status" value="1"/>
</dbReference>
<dbReference type="FunFam" id="1.25.40.10:FF:000348">
    <property type="entry name" value="Pentatricopeptide repeat-containing protein chloroplastic"/>
    <property type="match status" value="1"/>
</dbReference>
<dbReference type="FunFam" id="1.25.40.10:FF:000427">
    <property type="entry name" value="Pentatricopeptide repeat-containing protein chloroplastic"/>
    <property type="match status" value="1"/>
</dbReference>
<dbReference type="Gene3D" id="1.25.40.10">
    <property type="entry name" value="Tetratricopeptide repeat domain"/>
    <property type="match status" value="3"/>
</dbReference>
<dbReference type="InterPro" id="IPR046848">
    <property type="entry name" value="E_motif"/>
</dbReference>
<dbReference type="InterPro" id="IPR002885">
    <property type="entry name" value="Pentatricopeptide_rpt"/>
</dbReference>
<dbReference type="InterPro" id="IPR046960">
    <property type="entry name" value="PPR_At4g14850-like_plant"/>
</dbReference>
<dbReference type="InterPro" id="IPR011990">
    <property type="entry name" value="TPR-like_helical_dom_sf"/>
</dbReference>
<dbReference type="NCBIfam" id="TIGR00756">
    <property type="entry name" value="PPR"/>
    <property type="match status" value="6"/>
</dbReference>
<dbReference type="PANTHER" id="PTHR47926">
    <property type="entry name" value="PENTATRICOPEPTIDE REPEAT-CONTAINING PROTEIN"/>
    <property type="match status" value="1"/>
</dbReference>
<dbReference type="PANTHER" id="PTHR47926:SF489">
    <property type="entry name" value="PENTATRICOPEPTIDE REPEAT-CONTAINING PROTEIN"/>
    <property type="match status" value="1"/>
</dbReference>
<dbReference type="Pfam" id="PF20431">
    <property type="entry name" value="E_motif"/>
    <property type="match status" value="1"/>
</dbReference>
<dbReference type="Pfam" id="PF01535">
    <property type="entry name" value="PPR"/>
    <property type="match status" value="6"/>
</dbReference>
<dbReference type="Pfam" id="PF12854">
    <property type="entry name" value="PPR_1"/>
    <property type="match status" value="1"/>
</dbReference>
<dbReference type="Pfam" id="PF13041">
    <property type="entry name" value="PPR_2"/>
    <property type="match status" value="1"/>
</dbReference>
<dbReference type="SUPFAM" id="SSF48452">
    <property type="entry name" value="TPR-like"/>
    <property type="match status" value="1"/>
</dbReference>
<dbReference type="PROSITE" id="PS51375">
    <property type="entry name" value="PPR"/>
    <property type="match status" value="12"/>
</dbReference>
<sequence>MNMSLLQTPSLLMYNKMLKSLADGKSFTKVLALFGELRGQGLYPDNFTLPVVLKSIGRLRKVIEGEKVHGYAVKAGLEFDSYVSNSLMGMYASLGKIEITHKVFDEMPQRDVVSWNGLISSYVGNGRFEDAIGVFKRMSQESNLKFDEGTIVSTLSACSALKNLEIGERIYRFVVTEFEMSVRIGNALVDMFCKCGCLDKARAVFDSMRDKNVKCWTSMVFGYVSTGRIDEARVLFERSPVKDVVLWTAMMNGYVQFNRFDEALELFRCMQTAGIRPDNFVLVSLLTGCAQTGALEQGKWIHGYINENRVTVDKVVGTALVDMYAKCGCIETALEVFYEIKERDTASWTSLIYGLAMNGMSGRALDLYYEMENVGVRLDAITFVAVLTACNHGGFVAEGRKIFHSMTERHNVQPKSEHCSCLIDLLCRAGLLDEAEELIDKMRGESDETLVPVYCSLLSAARNYGNVKIAERVAEKLEKVEVSDSSAHTLLASVYASANRWEDVTNVRRKMKDLGIRKFPGCSSIEIDGVGHEFIVGDDLLSHPKMDEINSMLHQTTNLMLDLEHKEIDS</sequence>
<organism>
    <name type="scientific">Arabidopsis thaliana</name>
    <name type="common">Mouse-ear cress</name>
    <dbReference type="NCBI Taxonomy" id="3702"/>
    <lineage>
        <taxon>Eukaryota</taxon>
        <taxon>Viridiplantae</taxon>
        <taxon>Streptophyta</taxon>
        <taxon>Embryophyta</taxon>
        <taxon>Tracheophyta</taxon>
        <taxon>Spermatophyta</taxon>
        <taxon>Magnoliopsida</taxon>
        <taxon>eudicotyledons</taxon>
        <taxon>Gunneridae</taxon>
        <taxon>Pentapetalae</taxon>
        <taxon>rosids</taxon>
        <taxon>malvids</taxon>
        <taxon>Brassicales</taxon>
        <taxon>Brassicaceae</taxon>
        <taxon>Camelineae</taxon>
        <taxon>Arabidopsis</taxon>
    </lineage>
</organism>
<keyword id="KW-1185">Reference proteome</keyword>
<keyword id="KW-0677">Repeat</keyword>
<name>PPR65_ARATH</name>
<accession>Q9C866</accession>
<evidence type="ECO:0000305" key="1"/>
<comment type="similarity">
    <text evidence="1">Belongs to the PPR family. PCMP-E subfamily.</text>
</comment>
<comment type="online information" name="Pentatricopeptide repeat proteins">
    <link uri="https://ppr.plantenergy.uwa.edu.au"/>
</comment>
<reference key="1">
    <citation type="journal article" date="2000" name="Nature">
        <title>Sequence and analysis of chromosome 1 of the plant Arabidopsis thaliana.</title>
        <authorList>
            <person name="Theologis A."/>
            <person name="Ecker J.R."/>
            <person name="Palm C.J."/>
            <person name="Federspiel N.A."/>
            <person name="Kaul S."/>
            <person name="White O."/>
            <person name="Alonso J."/>
            <person name="Altafi H."/>
            <person name="Araujo R."/>
            <person name="Bowman C.L."/>
            <person name="Brooks S.Y."/>
            <person name="Buehler E."/>
            <person name="Chan A."/>
            <person name="Chao Q."/>
            <person name="Chen H."/>
            <person name="Cheuk R.F."/>
            <person name="Chin C.W."/>
            <person name="Chung M.K."/>
            <person name="Conn L."/>
            <person name="Conway A.B."/>
            <person name="Conway A.R."/>
            <person name="Creasy T.H."/>
            <person name="Dewar K."/>
            <person name="Dunn P."/>
            <person name="Etgu P."/>
            <person name="Feldblyum T.V."/>
            <person name="Feng J.-D."/>
            <person name="Fong B."/>
            <person name="Fujii C.Y."/>
            <person name="Gill J.E."/>
            <person name="Goldsmith A.D."/>
            <person name="Haas B."/>
            <person name="Hansen N.F."/>
            <person name="Hughes B."/>
            <person name="Huizar L."/>
            <person name="Hunter J.L."/>
            <person name="Jenkins J."/>
            <person name="Johnson-Hopson C."/>
            <person name="Khan S."/>
            <person name="Khaykin E."/>
            <person name="Kim C.J."/>
            <person name="Koo H.L."/>
            <person name="Kremenetskaia I."/>
            <person name="Kurtz D.B."/>
            <person name="Kwan A."/>
            <person name="Lam B."/>
            <person name="Langin-Hooper S."/>
            <person name="Lee A."/>
            <person name="Lee J.M."/>
            <person name="Lenz C.A."/>
            <person name="Li J.H."/>
            <person name="Li Y.-P."/>
            <person name="Lin X."/>
            <person name="Liu S.X."/>
            <person name="Liu Z.A."/>
            <person name="Luros J.S."/>
            <person name="Maiti R."/>
            <person name="Marziali A."/>
            <person name="Militscher J."/>
            <person name="Miranda M."/>
            <person name="Nguyen M."/>
            <person name="Nierman W.C."/>
            <person name="Osborne B.I."/>
            <person name="Pai G."/>
            <person name="Peterson J."/>
            <person name="Pham P.K."/>
            <person name="Rizzo M."/>
            <person name="Rooney T."/>
            <person name="Rowley D."/>
            <person name="Sakano H."/>
            <person name="Salzberg S.L."/>
            <person name="Schwartz J.R."/>
            <person name="Shinn P."/>
            <person name="Southwick A.M."/>
            <person name="Sun H."/>
            <person name="Tallon L.J."/>
            <person name="Tambunga G."/>
            <person name="Toriumi M.J."/>
            <person name="Town C.D."/>
            <person name="Utterback T."/>
            <person name="Van Aken S."/>
            <person name="Vaysberg M."/>
            <person name="Vysotskaia V.S."/>
            <person name="Walker M."/>
            <person name="Wu D."/>
            <person name="Yu G."/>
            <person name="Fraser C.M."/>
            <person name="Venter J.C."/>
            <person name="Davis R.W."/>
        </authorList>
    </citation>
    <scope>NUCLEOTIDE SEQUENCE [LARGE SCALE GENOMIC DNA]</scope>
    <source>
        <strain>cv. Columbia</strain>
    </source>
</reference>
<reference key="2">
    <citation type="journal article" date="2017" name="Plant J.">
        <title>Araport11: a complete reannotation of the Arabidopsis thaliana reference genome.</title>
        <authorList>
            <person name="Cheng C.Y."/>
            <person name="Krishnakumar V."/>
            <person name="Chan A.P."/>
            <person name="Thibaud-Nissen F."/>
            <person name="Schobel S."/>
            <person name="Town C.D."/>
        </authorList>
    </citation>
    <scope>GENOME REANNOTATION</scope>
    <source>
        <strain>cv. Columbia</strain>
    </source>
</reference>
<reference key="3">
    <citation type="journal article" date="2004" name="Plant Cell">
        <title>Genome-wide analysis of Arabidopsis pentatricopeptide repeat proteins reveals their essential role in organelle biogenesis.</title>
        <authorList>
            <person name="Lurin C."/>
            <person name="Andres C."/>
            <person name="Aubourg S."/>
            <person name="Bellaoui M."/>
            <person name="Bitton F."/>
            <person name="Bruyere C."/>
            <person name="Caboche M."/>
            <person name="Debast C."/>
            <person name="Gualberto J."/>
            <person name="Hoffmann B."/>
            <person name="Lecharny A."/>
            <person name="Le Ret M."/>
            <person name="Martin-Magniette M.-L."/>
            <person name="Mireau H."/>
            <person name="Peeters N."/>
            <person name="Renou J.-P."/>
            <person name="Szurek B."/>
            <person name="Taconnat L."/>
            <person name="Small I."/>
        </authorList>
    </citation>
    <scope>GENE FAMILY</scope>
</reference>
<gene>
    <name type="primary">PCMP-E55</name>
    <name type="ordered locus">At1g31430</name>
    <name type="ORF">T8E3.8</name>
</gene>
<proteinExistence type="evidence at transcript level"/>
<feature type="chain" id="PRO_0000342806" description="Pentatricopeptide repeat-containing protein At1g31430">
    <location>
        <begin position="1"/>
        <end position="570"/>
    </location>
</feature>
<feature type="repeat" description="PPR 1">
    <location>
        <begin position="10"/>
        <end position="44"/>
    </location>
</feature>
<feature type="repeat" description="PPR 2">
    <location>
        <begin position="45"/>
        <end position="79"/>
    </location>
</feature>
<feature type="repeat" description="PPR 3">
    <location>
        <begin position="80"/>
        <end position="110"/>
    </location>
</feature>
<feature type="repeat" description="PPR 4">
    <location>
        <begin position="111"/>
        <end position="141"/>
    </location>
</feature>
<feature type="repeat" description="PPR 5">
    <location>
        <begin position="147"/>
        <end position="177"/>
    </location>
</feature>
<feature type="repeat" description="PPR 6">
    <location>
        <begin position="181"/>
        <end position="215"/>
    </location>
</feature>
<feature type="repeat" description="PPR 7">
    <location>
        <begin position="216"/>
        <end position="242"/>
    </location>
</feature>
<feature type="repeat" description="PPR 8">
    <location>
        <begin position="243"/>
        <end position="277"/>
    </location>
</feature>
<feature type="repeat" description="PPR 9">
    <location>
        <begin position="278"/>
        <end position="312"/>
    </location>
</feature>
<feature type="repeat" description="PPR 10">
    <location>
        <begin position="313"/>
        <end position="343"/>
    </location>
</feature>
<feature type="repeat" description="PPR 11">
    <location>
        <begin position="344"/>
        <end position="378"/>
    </location>
</feature>
<feature type="repeat" description="PPR 12">
    <location>
        <begin position="379"/>
        <end position="414"/>
    </location>
</feature>
<feature type="repeat" description="PPR 13">
    <location>
        <begin position="415"/>
        <end position="449"/>
    </location>
</feature>
<feature type="region of interest" description="Type E motif">
    <location>
        <begin position="453"/>
        <end position="528"/>
    </location>
</feature>
<feature type="region of interest" description="Type E(+) motif">
    <location>
        <begin position="529"/>
        <end position="561"/>
    </location>
</feature>
<protein>
    <recommendedName>
        <fullName>Pentatricopeptide repeat-containing protein At1g31430</fullName>
    </recommendedName>
</protein>